<evidence type="ECO:0000250" key="1"/>
<evidence type="ECO:0000255" key="2"/>
<evidence type="ECO:0000305" key="3"/>
<sequence>MKSNKLMALGIVFSIAVLIVIGTIAYSIINDKKDKGNEMFAYSTQQSLGKDDAPVKVVEFGDFKCPACRTWDVTVLPRLKEEYIDKGKVQLYFINFPFIGKDSDLGAAAGEAIYKQDKDSFWIFYDEIYQNQKKDTEEWITEDLLLSIVKEKLPKVDVEQFKKDLHSKDIKEKVSKDSDRAQKLKVQGAPSVYVNGNLANPDFDSMKKAIDKELKK</sequence>
<reference key="1">
    <citation type="journal article" date="2003" name="Nature">
        <title>Genome sequence of Bacillus cereus and comparative analysis with Bacillus anthracis.</title>
        <authorList>
            <person name="Ivanova N."/>
            <person name="Sorokin A."/>
            <person name="Anderson I."/>
            <person name="Galleron N."/>
            <person name="Candelon B."/>
            <person name="Kapatral V."/>
            <person name="Bhattacharyya A."/>
            <person name="Reznik G."/>
            <person name="Mikhailova N."/>
            <person name="Lapidus A."/>
            <person name="Chu L."/>
            <person name="Mazur M."/>
            <person name="Goltsman E."/>
            <person name="Larsen N."/>
            <person name="D'Souza M."/>
            <person name="Walunas T."/>
            <person name="Grechkin Y."/>
            <person name="Pusch G."/>
            <person name="Haselkorn R."/>
            <person name="Fonstein M."/>
            <person name="Ehrlich S.D."/>
            <person name="Overbeek R."/>
            <person name="Kyrpides N.C."/>
        </authorList>
    </citation>
    <scope>NUCLEOTIDE SEQUENCE [LARGE SCALE GENOMIC DNA]</scope>
    <source>
        <strain>ATCC 14579 / DSM 31 / CCUG 7414 / JCM 2152 / NBRC 15305 / NCIMB 9373 / NCTC 2599 / NRRL B-3711</strain>
    </source>
</reference>
<dbReference type="EMBL" id="AE016877">
    <property type="protein sequence ID" value="AAP07563.1"/>
    <property type="molecule type" value="Genomic_DNA"/>
</dbReference>
<dbReference type="RefSeq" id="NP_830362.1">
    <property type="nucleotide sequence ID" value="NC_004722.1"/>
</dbReference>
<dbReference type="RefSeq" id="WP_000841307.1">
    <property type="nucleotide sequence ID" value="NZ_CP138336.1"/>
</dbReference>
<dbReference type="SMR" id="Q81I73"/>
<dbReference type="STRING" id="226900.BC_0542"/>
<dbReference type="KEGG" id="bce:BC0542"/>
<dbReference type="PATRIC" id="fig|226900.8.peg.499"/>
<dbReference type="HOGENOM" id="CLU_000288_47_1_9"/>
<dbReference type="OrthoDB" id="117402at2"/>
<dbReference type="Proteomes" id="UP000001417">
    <property type="component" value="Chromosome"/>
</dbReference>
<dbReference type="GO" id="GO:0016491">
    <property type="term" value="F:oxidoreductase activity"/>
    <property type="evidence" value="ECO:0007669"/>
    <property type="project" value="UniProtKB-KW"/>
</dbReference>
<dbReference type="Gene3D" id="3.40.30.10">
    <property type="entry name" value="Glutaredoxin"/>
    <property type="match status" value="1"/>
</dbReference>
<dbReference type="InterPro" id="IPR012336">
    <property type="entry name" value="Thioredoxin-like_fold"/>
</dbReference>
<dbReference type="InterPro" id="IPR036249">
    <property type="entry name" value="Thioredoxin-like_sf"/>
</dbReference>
<dbReference type="PANTHER" id="PTHR13887:SF14">
    <property type="entry name" value="DISULFIDE BOND FORMATION PROTEIN D"/>
    <property type="match status" value="1"/>
</dbReference>
<dbReference type="PANTHER" id="PTHR13887">
    <property type="entry name" value="GLUTATHIONE S-TRANSFERASE KAPPA"/>
    <property type="match status" value="1"/>
</dbReference>
<dbReference type="Pfam" id="PF13462">
    <property type="entry name" value="Thioredoxin_4"/>
    <property type="match status" value="1"/>
</dbReference>
<dbReference type="SUPFAM" id="SSF52833">
    <property type="entry name" value="Thioredoxin-like"/>
    <property type="match status" value="1"/>
</dbReference>
<name>BDBD_BACCR</name>
<keyword id="KW-1015">Disulfide bond</keyword>
<keyword id="KW-0560">Oxidoreductase</keyword>
<keyword id="KW-0676">Redox-active center</keyword>
<keyword id="KW-1185">Reference proteome</keyword>
<keyword id="KW-0732">Signal</keyword>
<feature type="signal peptide" evidence="2">
    <location>
        <begin position="1"/>
        <end position="25"/>
    </location>
</feature>
<feature type="chain" id="PRO_0000034271" description="Probable disulfide bond formation protein D">
    <location>
        <begin position="26"/>
        <end position="216"/>
    </location>
</feature>
<feature type="disulfide bond" description="Redox-active" evidence="2">
    <location>
        <begin position="65"/>
        <end position="68"/>
    </location>
</feature>
<organism>
    <name type="scientific">Bacillus cereus (strain ATCC 14579 / DSM 31 / CCUG 7414 / JCM 2152 / NBRC 15305 / NCIMB 9373 / NCTC 2599 / NRRL B-3711)</name>
    <dbReference type="NCBI Taxonomy" id="226900"/>
    <lineage>
        <taxon>Bacteria</taxon>
        <taxon>Bacillati</taxon>
        <taxon>Bacillota</taxon>
        <taxon>Bacilli</taxon>
        <taxon>Bacillales</taxon>
        <taxon>Bacillaceae</taxon>
        <taxon>Bacillus</taxon>
        <taxon>Bacillus cereus group</taxon>
    </lineage>
</organism>
<protein>
    <recommendedName>
        <fullName>Probable disulfide bond formation protein D</fullName>
    </recommendedName>
    <alternativeName>
        <fullName>Disulfide oxidoreductase D</fullName>
    </alternativeName>
    <alternativeName>
        <fullName>Thiol-disulfide oxidoreductase D</fullName>
    </alternativeName>
</protein>
<proteinExistence type="inferred from homology"/>
<comment type="function">
    <text evidence="1">May be required for disulfide bond formation in some proteins.</text>
</comment>
<comment type="similarity">
    <text evidence="3">Belongs to the thioredoxin family. DsbA subfamily.</text>
</comment>
<gene>
    <name type="primary">bdbD</name>
    <name type="ordered locus">BC_0542</name>
</gene>
<accession>Q81I73</accession>